<name>ODO1_SOLTU</name>
<accession>P81895</accession>
<reference evidence="5" key="1">
    <citation type="journal article" date="1999" name="Biochem. J.">
        <title>Plant mitochondrial 2-oxoglutarate dehydrogenase complex: purification and characterization in potato.</title>
        <authorList>
            <person name="Millar A.H."/>
            <person name="Hill S.A."/>
            <person name="Leaver C.J."/>
        </authorList>
    </citation>
    <scope>PROTEIN SEQUENCE</scope>
    <scope>FUNCTION</scope>
    <scope>CATALYTIC ACTIVITY</scope>
    <scope>SUBCELLULAR LOCATION</scope>
    <source>
        <strain evidence="3">cv. Romano</strain>
        <tissue evidence="3">Tuber</tissue>
    </source>
</reference>
<comment type="function">
    <text evidence="3">The 2-oxoglutarate dehydrogenase complex catalyzes the overall conversion of 2-oxoglutarate to succinyl-CoA and CO(2). It contains multiple copies of three enzymatic components: 2-oxoglutarate dehydrogenase (E1), dihydrolipoamide succinyltransferase (E2) and lipoamide dehydrogenase (E3).</text>
</comment>
<comment type="catalytic activity">
    <reaction evidence="3">
        <text>N(6)-[(R)-lipoyl]-L-lysyl-[protein] + 2-oxoglutarate + H(+) = N(6)-[(R)-S(8)-succinyldihydrolipoyl]-L-lysyl-[protein] + CO2</text>
        <dbReference type="Rhea" id="RHEA:12188"/>
        <dbReference type="Rhea" id="RHEA-COMP:10474"/>
        <dbReference type="Rhea" id="RHEA-COMP:20092"/>
        <dbReference type="ChEBI" id="CHEBI:15378"/>
        <dbReference type="ChEBI" id="CHEBI:16526"/>
        <dbReference type="ChEBI" id="CHEBI:16810"/>
        <dbReference type="ChEBI" id="CHEBI:83099"/>
        <dbReference type="ChEBI" id="CHEBI:83120"/>
        <dbReference type="EC" id="1.2.4.2"/>
    </reaction>
</comment>
<comment type="cofactor">
    <cofactor evidence="1">
        <name>thiamine diphosphate</name>
        <dbReference type="ChEBI" id="CHEBI:58937"/>
    </cofactor>
    <cofactor evidence="2">
        <name>Mg(2+)</name>
        <dbReference type="ChEBI" id="CHEBI:18420"/>
    </cofactor>
</comment>
<comment type="subunit">
    <text evidence="2">Homodimer (By similarity). Component of the 2-oxoglutarate dehydrogenase complex (By similarity).</text>
</comment>
<comment type="subcellular location">
    <subcellularLocation>
        <location evidence="3">Mitochondrion membrane</location>
    </subcellularLocation>
</comment>
<comment type="similarity">
    <text evidence="5">Belongs to the alpha-ketoglutarate dehydrogenase family.</text>
</comment>
<dbReference type="EC" id="1.2.4.2"/>
<dbReference type="InParanoid" id="P81895"/>
<dbReference type="BRENDA" id="1.2.1.105">
    <property type="organism ID" value="5757"/>
</dbReference>
<dbReference type="SABIO-RK" id="P81895"/>
<dbReference type="Proteomes" id="UP000011115">
    <property type="component" value="Unassembled WGS sequence"/>
</dbReference>
<dbReference type="GO" id="GO:0031966">
    <property type="term" value="C:mitochondrial membrane"/>
    <property type="evidence" value="ECO:0000314"/>
    <property type="project" value="UniProtKB"/>
</dbReference>
<dbReference type="GO" id="GO:0004591">
    <property type="term" value="F:oxoglutarate dehydrogenase (succinyl-transferring) activity"/>
    <property type="evidence" value="ECO:0000314"/>
    <property type="project" value="UniProtKB"/>
</dbReference>
<dbReference type="GO" id="GO:0006091">
    <property type="term" value="P:generation of precursor metabolites and energy"/>
    <property type="evidence" value="ECO:0000314"/>
    <property type="project" value="UniProtKB"/>
</dbReference>
<dbReference type="GO" id="GO:0006096">
    <property type="term" value="P:glycolytic process"/>
    <property type="evidence" value="ECO:0007669"/>
    <property type="project" value="UniProtKB-KW"/>
</dbReference>
<sequence>AQAAPVPRPVXLSKKTDSF</sequence>
<keyword id="KW-0903">Direct protein sequencing</keyword>
<keyword id="KW-0324">Glycolysis</keyword>
<keyword id="KW-0472">Membrane</keyword>
<keyword id="KW-0496">Mitochondrion</keyword>
<keyword id="KW-0560">Oxidoreductase</keyword>
<keyword id="KW-1185">Reference proteome</keyword>
<keyword id="KW-0786">Thiamine pyrophosphate</keyword>
<organism>
    <name type="scientific">Solanum tuberosum</name>
    <name type="common">Potato</name>
    <dbReference type="NCBI Taxonomy" id="4113"/>
    <lineage>
        <taxon>Eukaryota</taxon>
        <taxon>Viridiplantae</taxon>
        <taxon>Streptophyta</taxon>
        <taxon>Embryophyta</taxon>
        <taxon>Tracheophyta</taxon>
        <taxon>Spermatophyta</taxon>
        <taxon>Magnoliopsida</taxon>
        <taxon>eudicotyledons</taxon>
        <taxon>Gunneridae</taxon>
        <taxon>Pentapetalae</taxon>
        <taxon>asterids</taxon>
        <taxon>lamiids</taxon>
        <taxon>Solanales</taxon>
        <taxon>Solanaceae</taxon>
        <taxon>Solanoideae</taxon>
        <taxon>Solaneae</taxon>
        <taxon>Solanum</taxon>
    </lineage>
</organism>
<feature type="chain" id="PRO_0000238928" description="2-oxoglutarate dehydrogenase, mitochondrial">
    <location>
        <begin position="1"/>
        <end position="19" status="greater than"/>
    </location>
</feature>
<feature type="non-terminal residue" evidence="4">
    <location>
        <position position="19"/>
    </location>
</feature>
<proteinExistence type="evidence at protein level"/>
<protein>
    <recommendedName>
        <fullName>2-oxoglutarate dehydrogenase, mitochondrial</fullName>
        <ecNumber>1.2.4.2</ecNumber>
    </recommendedName>
    <alternativeName>
        <fullName>2-oxoglutarate dehydrogenase complex component E1</fullName>
        <shortName>OGDC-E1</shortName>
    </alternativeName>
    <alternativeName>
        <fullName>Alpha-ketoglutarate dehydrogenase</fullName>
    </alternativeName>
</protein>
<evidence type="ECO:0000250" key="1">
    <source>
        <dbReference type="UniProtKB" id="P20967"/>
    </source>
</evidence>
<evidence type="ECO:0000250" key="2">
    <source>
        <dbReference type="UniProtKB" id="Q02218"/>
    </source>
</evidence>
<evidence type="ECO:0000269" key="3">
    <source>
    </source>
</evidence>
<evidence type="ECO:0000303" key="4">
    <source>
    </source>
</evidence>
<evidence type="ECO:0000305" key="5"/>